<accession>Q58056</accession>
<name>Y639_METJA</name>
<sequence length="109" mass="12890">MWLLIFNIIFNGETMKLAVDAVFYVREGFNFEKAFKEVLKILGEDVKILSVEYPELALISENGYYYRCGFMLDKELREELSGEEINKIKEKIKKLFEDEIIYTLTCEIL</sequence>
<reference key="1">
    <citation type="journal article" date="1996" name="Science">
        <title>Complete genome sequence of the methanogenic archaeon, Methanococcus jannaschii.</title>
        <authorList>
            <person name="Bult C.J."/>
            <person name="White O."/>
            <person name="Olsen G.J."/>
            <person name="Zhou L."/>
            <person name="Fleischmann R.D."/>
            <person name="Sutton G.G."/>
            <person name="Blake J.A."/>
            <person name="FitzGerald L.M."/>
            <person name="Clayton R.A."/>
            <person name="Gocayne J.D."/>
            <person name="Kerlavage A.R."/>
            <person name="Dougherty B.A."/>
            <person name="Tomb J.-F."/>
            <person name="Adams M.D."/>
            <person name="Reich C.I."/>
            <person name="Overbeek R."/>
            <person name="Kirkness E.F."/>
            <person name="Weinstock K.G."/>
            <person name="Merrick J.M."/>
            <person name="Glodek A."/>
            <person name="Scott J.L."/>
            <person name="Geoghagen N.S.M."/>
            <person name="Weidman J.F."/>
            <person name="Fuhrmann J.L."/>
            <person name="Nguyen D."/>
            <person name="Utterback T.R."/>
            <person name="Kelley J.M."/>
            <person name="Peterson J.D."/>
            <person name="Sadow P.W."/>
            <person name="Hanna M.C."/>
            <person name="Cotton M.D."/>
            <person name="Roberts K.M."/>
            <person name="Hurst M.A."/>
            <person name="Kaine B.P."/>
            <person name="Borodovsky M."/>
            <person name="Klenk H.-P."/>
            <person name="Fraser C.M."/>
            <person name="Smith H.O."/>
            <person name="Woese C.R."/>
            <person name="Venter J.C."/>
        </authorList>
    </citation>
    <scope>NUCLEOTIDE SEQUENCE [LARGE SCALE GENOMIC DNA]</scope>
    <source>
        <strain>ATCC 43067 / DSM 2661 / JAL-1 / JCM 10045 / NBRC 100440</strain>
    </source>
</reference>
<protein>
    <recommendedName>
        <fullName>Uncharacterized protein MJ0639</fullName>
    </recommendedName>
</protein>
<keyword id="KW-1185">Reference proteome</keyword>
<gene>
    <name type="ordered locus">MJ0639</name>
</gene>
<feature type="chain" id="PRO_0000106966" description="Uncharacterized protein MJ0639">
    <location>
        <begin position="1"/>
        <end position="109"/>
    </location>
</feature>
<organism>
    <name type="scientific">Methanocaldococcus jannaschii (strain ATCC 43067 / DSM 2661 / JAL-1 / JCM 10045 / NBRC 100440)</name>
    <name type="common">Methanococcus jannaschii</name>
    <dbReference type="NCBI Taxonomy" id="243232"/>
    <lineage>
        <taxon>Archaea</taxon>
        <taxon>Methanobacteriati</taxon>
        <taxon>Methanobacteriota</taxon>
        <taxon>Methanomada group</taxon>
        <taxon>Methanococci</taxon>
        <taxon>Methanococcales</taxon>
        <taxon>Methanocaldococcaceae</taxon>
        <taxon>Methanocaldococcus</taxon>
    </lineage>
</organism>
<proteinExistence type="predicted"/>
<dbReference type="EMBL" id="L77117">
    <property type="protein sequence ID" value="AAB98635.1"/>
    <property type="molecule type" value="Genomic_DNA"/>
</dbReference>
<dbReference type="PIR" id="G64379">
    <property type="entry name" value="G64379"/>
</dbReference>
<dbReference type="FunCoup" id="Q58056">
    <property type="interactions" value="12"/>
</dbReference>
<dbReference type="STRING" id="243232.MJ_0639"/>
<dbReference type="PaxDb" id="243232-MJ_0639"/>
<dbReference type="EnsemblBacteria" id="AAB98635">
    <property type="protein sequence ID" value="AAB98635"/>
    <property type="gene ID" value="MJ_0639"/>
</dbReference>
<dbReference type="KEGG" id="mja:MJ_0639"/>
<dbReference type="eggNOG" id="arCOG05044">
    <property type="taxonomic scope" value="Archaea"/>
</dbReference>
<dbReference type="HOGENOM" id="CLU_2353229_0_0_2"/>
<dbReference type="InParanoid" id="Q58056"/>
<dbReference type="Proteomes" id="UP000000805">
    <property type="component" value="Chromosome"/>
</dbReference>